<comment type="function">
    <text evidence="1">Catalyzes the attachment of serine to tRNA(Ser). Is also able to aminoacylate tRNA(Sec) with serine, to form the misacylated tRNA L-seryl-tRNA(Sec), which will be further converted into selenocysteinyl-tRNA(Sec).</text>
</comment>
<comment type="catalytic activity">
    <reaction evidence="1">
        <text>tRNA(Ser) + L-serine + ATP = L-seryl-tRNA(Ser) + AMP + diphosphate + H(+)</text>
        <dbReference type="Rhea" id="RHEA:12292"/>
        <dbReference type="Rhea" id="RHEA-COMP:9669"/>
        <dbReference type="Rhea" id="RHEA-COMP:9703"/>
        <dbReference type="ChEBI" id="CHEBI:15378"/>
        <dbReference type="ChEBI" id="CHEBI:30616"/>
        <dbReference type="ChEBI" id="CHEBI:33019"/>
        <dbReference type="ChEBI" id="CHEBI:33384"/>
        <dbReference type="ChEBI" id="CHEBI:78442"/>
        <dbReference type="ChEBI" id="CHEBI:78533"/>
        <dbReference type="ChEBI" id="CHEBI:456215"/>
        <dbReference type="EC" id="6.1.1.11"/>
    </reaction>
</comment>
<comment type="catalytic activity">
    <reaction evidence="1">
        <text>tRNA(Sec) + L-serine + ATP = L-seryl-tRNA(Sec) + AMP + diphosphate + H(+)</text>
        <dbReference type="Rhea" id="RHEA:42580"/>
        <dbReference type="Rhea" id="RHEA-COMP:9742"/>
        <dbReference type="Rhea" id="RHEA-COMP:10128"/>
        <dbReference type="ChEBI" id="CHEBI:15378"/>
        <dbReference type="ChEBI" id="CHEBI:30616"/>
        <dbReference type="ChEBI" id="CHEBI:33019"/>
        <dbReference type="ChEBI" id="CHEBI:33384"/>
        <dbReference type="ChEBI" id="CHEBI:78442"/>
        <dbReference type="ChEBI" id="CHEBI:78533"/>
        <dbReference type="ChEBI" id="CHEBI:456215"/>
        <dbReference type="EC" id="6.1.1.11"/>
    </reaction>
</comment>
<comment type="pathway">
    <text evidence="1">Aminoacyl-tRNA biosynthesis; selenocysteinyl-tRNA(Sec) biosynthesis; L-seryl-tRNA(Sec) from L-serine and tRNA(Sec): step 1/1.</text>
</comment>
<comment type="subunit">
    <text evidence="1">Homodimer. The tRNA molecule binds across the dimer.</text>
</comment>
<comment type="subcellular location">
    <subcellularLocation>
        <location evidence="1">Cytoplasm</location>
    </subcellularLocation>
</comment>
<comment type="domain">
    <text evidence="1">Consists of two distinct domains, a catalytic core and a N-terminal extension that is involved in tRNA binding.</text>
</comment>
<comment type="similarity">
    <text evidence="1">Belongs to the class-II aminoacyl-tRNA synthetase family. Type-1 seryl-tRNA synthetase subfamily.</text>
</comment>
<sequence>MLDIQLLRKDIDAVAARLKDRGYVLDVAGFAALEAERKAIQTRTEELQARRNSLSKQIGVLKGKGEDASGVMAEVSGIGDELKASAAQLDVVQAKLQDLMLSIPNLPHESVPAGRDETQNVEVRREGTPRTFDFPVKDHVDLGAALGLDFDAGAKLSGARFTVLKGQVARLHRALAQFMLDTHTLEHGYTEAYVPYIVNAASMRGTGQLPKFEEDLFRVPRKMGHSAEEGDGERVENFYLIPTAEVPLTNLVRDEIVAADTLPMMFAAHSPCFRSEAGSYGKDTRGMIRQHQFDKVEMVQIVQPETSAAALEAMTNCAENILRKLELPFRTVVLCTGDMGFGSTKTYDIEVWIPAQNTYREISSCSNMGDFQARRMQARFRNAQGKPELVHTLNGSGLAVGRTLVALLENYQNADGSVTVPTALRPYLGGQEVLKPAV</sequence>
<evidence type="ECO:0000255" key="1">
    <source>
        <dbReference type="HAMAP-Rule" id="MF_00176"/>
    </source>
</evidence>
<gene>
    <name evidence="1" type="primary">serS</name>
    <name type="ordered locus">Rpic_2551</name>
</gene>
<feature type="chain" id="PRO_1000098111" description="Serine--tRNA ligase">
    <location>
        <begin position="1"/>
        <end position="438"/>
    </location>
</feature>
<feature type="binding site" evidence="1">
    <location>
        <begin position="243"/>
        <end position="245"/>
    </location>
    <ligand>
        <name>L-serine</name>
        <dbReference type="ChEBI" id="CHEBI:33384"/>
    </ligand>
</feature>
<feature type="binding site" evidence="1">
    <location>
        <begin position="274"/>
        <end position="276"/>
    </location>
    <ligand>
        <name>ATP</name>
        <dbReference type="ChEBI" id="CHEBI:30616"/>
    </ligand>
</feature>
<feature type="binding site" evidence="1">
    <location>
        <position position="297"/>
    </location>
    <ligand>
        <name>L-serine</name>
        <dbReference type="ChEBI" id="CHEBI:33384"/>
    </ligand>
</feature>
<feature type="binding site" evidence="1">
    <location>
        <begin position="361"/>
        <end position="364"/>
    </location>
    <ligand>
        <name>ATP</name>
        <dbReference type="ChEBI" id="CHEBI:30616"/>
    </ligand>
</feature>
<feature type="binding site" evidence="1">
    <location>
        <position position="396"/>
    </location>
    <ligand>
        <name>L-serine</name>
        <dbReference type="ChEBI" id="CHEBI:33384"/>
    </ligand>
</feature>
<name>SYS_RALPJ</name>
<accession>B2U9Y5</accession>
<dbReference type="EC" id="6.1.1.11" evidence="1"/>
<dbReference type="EMBL" id="CP001068">
    <property type="protein sequence ID" value="ACD27679.1"/>
    <property type="molecule type" value="Genomic_DNA"/>
</dbReference>
<dbReference type="SMR" id="B2U9Y5"/>
<dbReference type="STRING" id="402626.Rpic_2551"/>
<dbReference type="KEGG" id="rpi:Rpic_2551"/>
<dbReference type="eggNOG" id="COG0172">
    <property type="taxonomic scope" value="Bacteria"/>
</dbReference>
<dbReference type="HOGENOM" id="CLU_023797_1_1_4"/>
<dbReference type="UniPathway" id="UPA00906">
    <property type="reaction ID" value="UER00895"/>
</dbReference>
<dbReference type="GO" id="GO:0005737">
    <property type="term" value="C:cytoplasm"/>
    <property type="evidence" value="ECO:0007669"/>
    <property type="project" value="UniProtKB-SubCell"/>
</dbReference>
<dbReference type="GO" id="GO:0005524">
    <property type="term" value="F:ATP binding"/>
    <property type="evidence" value="ECO:0007669"/>
    <property type="project" value="UniProtKB-UniRule"/>
</dbReference>
<dbReference type="GO" id="GO:0004828">
    <property type="term" value="F:serine-tRNA ligase activity"/>
    <property type="evidence" value="ECO:0007669"/>
    <property type="project" value="UniProtKB-UniRule"/>
</dbReference>
<dbReference type="GO" id="GO:0016260">
    <property type="term" value="P:selenocysteine biosynthetic process"/>
    <property type="evidence" value="ECO:0007669"/>
    <property type="project" value="UniProtKB-UniRule"/>
</dbReference>
<dbReference type="GO" id="GO:0006434">
    <property type="term" value="P:seryl-tRNA aminoacylation"/>
    <property type="evidence" value="ECO:0007669"/>
    <property type="project" value="UniProtKB-UniRule"/>
</dbReference>
<dbReference type="CDD" id="cd00770">
    <property type="entry name" value="SerRS_core"/>
    <property type="match status" value="1"/>
</dbReference>
<dbReference type="Gene3D" id="3.30.930.10">
    <property type="entry name" value="Bira Bifunctional Protein, Domain 2"/>
    <property type="match status" value="1"/>
</dbReference>
<dbReference type="Gene3D" id="1.10.287.40">
    <property type="entry name" value="Serine-tRNA synthetase, tRNA binding domain"/>
    <property type="match status" value="1"/>
</dbReference>
<dbReference type="HAMAP" id="MF_00176">
    <property type="entry name" value="Ser_tRNA_synth_type1"/>
    <property type="match status" value="1"/>
</dbReference>
<dbReference type="InterPro" id="IPR002314">
    <property type="entry name" value="aa-tRNA-synt_IIb"/>
</dbReference>
<dbReference type="InterPro" id="IPR006195">
    <property type="entry name" value="aa-tRNA-synth_II"/>
</dbReference>
<dbReference type="InterPro" id="IPR045864">
    <property type="entry name" value="aa-tRNA-synth_II/BPL/LPL"/>
</dbReference>
<dbReference type="InterPro" id="IPR002317">
    <property type="entry name" value="Ser-tRNA-ligase_type_1"/>
</dbReference>
<dbReference type="InterPro" id="IPR015866">
    <property type="entry name" value="Ser-tRNA-synth_1_N"/>
</dbReference>
<dbReference type="InterPro" id="IPR042103">
    <property type="entry name" value="SerRS_1_N_sf"/>
</dbReference>
<dbReference type="InterPro" id="IPR033729">
    <property type="entry name" value="SerRS_core"/>
</dbReference>
<dbReference type="InterPro" id="IPR010978">
    <property type="entry name" value="tRNA-bd_arm"/>
</dbReference>
<dbReference type="NCBIfam" id="TIGR00414">
    <property type="entry name" value="serS"/>
    <property type="match status" value="1"/>
</dbReference>
<dbReference type="PANTHER" id="PTHR43697:SF1">
    <property type="entry name" value="SERINE--TRNA LIGASE"/>
    <property type="match status" value="1"/>
</dbReference>
<dbReference type="PANTHER" id="PTHR43697">
    <property type="entry name" value="SERYL-TRNA SYNTHETASE"/>
    <property type="match status" value="1"/>
</dbReference>
<dbReference type="Pfam" id="PF02403">
    <property type="entry name" value="Seryl_tRNA_N"/>
    <property type="match status" value="1"/>
</dbReference>
<dbReference type="Pfam" id="PF00587">
    <property type="entry name" value="tRNA-synt_2b"/>
    <property type="match status" value="1"/>
</dbReference>
<dbReference type="PIRSF" id="PIRSF001529">
    <property type="entry name" value="Ser-tRNA-synth_IIa"/>
    <property type="match status" value="1"/>
</dbReference>
<dbReference type="PRINTS" id="PR00981">
    <property type="entry name" value="TRNASYNTHSER"/>
</dbReference>
<dbReference type="SUPFAM" id="SSF55681">
    <property type="entry name" value="Class II aaRS and biotin synthetases"/>
    <property type="match status" value="1"/>
</dbReference>
<dbReference type="SUPFAM" id="SSF46589">
    <property type="entry name" value="tRNA-binding arm"/>
    <property type="match status" value="1"/>
</dbReference>
<dbReference type="PROSITE" id="PS50862">
    <property type="entry name" value="AA_TRNA_LIGASE_II"/>
    <property type="match status" value="1"/>
</dbReference>
<reference key="1">
    <citation type="submission" date="2008-05" db="EMBL/GenBank/DDBJ databases">
        <title>Complete sequence of chromosome 1 of Ralstonia pickettii 12J.</title>
        <authorList>
            <person name="Lucas S."/>
            <person name="Copeland A."/>
            <person name="Lapidus A."/>
            <person name="Glavina del Rio T."/>
            <person name="Dalin E."/>
            <person name="Tice H."/>
            <person name="Bruce D."/>
            <person name="Goodwin L."/>
            <person name="Pitluck S."/>
            <person name="Meincke L."/>
            <person name="Brettin T."/>
            <person name="Detter J.C."/>
            <person name="Han C."/>
            <person name="Kuske C.R."/>
            <person name="Schmutz J."/>
            <person name="Larimer F."/>
            <person name="Land M."/>
            <person name="Hauser L."/>
            <person name="Kyrpides N."/>
            <person name="Mikhailova N."/>
            <person name="Marsh T."/>
            <person name="Richardson P."/>
        </authorList>
    </citation>
    <scope>NUCLEOTIDE SEQUENCE [LARGE SCALE GENOMIC DNA]</scope>
    <source>
        <strain>12J</strain>
    </source>
</reference>
<organism>
    <name type="scientific">Ralstonia pickettii (strain 12J)</name>
    <dbReference type="NCBI Taxonomy" id="402626"/>
    <lineage>
        <taxon>Bacteria</taxon>
        <taxon>Pseudomonadati</taxon>
        <taxon>Pseudomonadota</taxon>
        <taxon>Betaproteobacteria</taxon>
        <taxon>Burkholderiales</taxon>
        <taxon>Burkholderiaceae</taxon>
        <taxon>Ralstonia</taxon>
    </lineage>
</organism>
<proteinExistence type="inferred from homology"/>
<keyword id="KW-0030">Aminoacyl-tRNA synthetase</keyword>
<keyword id="KW-0067">ATP-binding</keyword>
<keyword id="KW-0963">Cytoplasm</keyword>
<keyword id="KW-0436">Ligase</keyword>
<keyword id="KW-0547">Nucleotide-binding</keyword>
<keyword id="KW-0648">Protein biosynthesis</keyword>
<protein>
    <recommendedName>
        <fullName evidence="1">Serine--tRNA ligase</fullName>
        <ecNumber evidence="1">6.1.1.11</ecNumber>
    </recommendedName>
    <alternativeName>
        <fullName evidence="1">Seryl-tRNA synthetase</fullName>
        <shortName evidence="1">SerRS</shortName>
    </alternativeName>
    <alternativeName>
        <fullName evidence="1">Seryl-tRNA(Ser/Sec) synthetase</fullName>
    </alternativeName>
</protein>